<accession>A6WXW5</accession>
<name>TAL_BRUA4</name>
<gene>
    <name evidence="1" type="primary">tal</name>
    <name type="ordered locus">Oant_1099</name>
</gene>
<feature type="chain" id="PRO_1000060474" description="Probable transaldolase">
    <location>
        <begin position="1"/>
        <end position="217"/>
    </location>
</feature>
<feature type="active site" description="Schiff-base intermediate with substrate" evidence="1">
    <location>
        <position position="83"/>
    </location>
</feature>
<keyword id="KW-0963">Cytoplasm</keyword>
<keyword id="KW-0570">Pentose shunt</keyword>
<keyword id="KW-1185">Reference proteome</keyword>
<keyword id="KW-0704">Schiff base</keyword>
<keyword id="KW-0808">Transferase</keyword>
<protein>
    <recommendedName>
        <fullName evidence="1">Probable transaldolase</fullName>
        <ecNumber evidence="1">2.2.1.2</ecNumber>
    </recommendedName>
</protein>
<sequence>MKFFVDTADVKEIRELNDLGLVDGVTTNPSLILKSGRDIIEVTKEICNIVKGPVSAEVAATEYEQMMKEAAVIAKIADNICIKLPVTLDGLKACKALSSDGHKVNMTLCFSANQALLAAKAGATFISPFIGRLDDTGINGMELIAEIRTIYDNYDYRTEILAASVRTVNHVKEAALIGADVVTAPPATLKALVKHPLTDKGLETFLADWAKTGQKIA</sequence>
<evidence type="ECO:0000255" key="1">
    <source>
        <dbReference type="HAMAP-Rule" id="MF_00494"/>
    </source>
</evidence>
<organism>
    <name type="scientific">Brucella anthropi (strain ATCC 49188 / DSM 6882 / CCUG 24695 / JCM 21032 / LMG 3331 / NBRC 15819 / NCTC 12168 / Alc 37)</name>
    <name type="common">Ochrobactrum anthropi</name>
    <dbReference type="NCBI Taxonomy" id="439375"/>
    <lineage>
        <taxon>Bacteria</taxon>
        <taxon>Pseudomonadati</taxon>
        <taxon>Pseudomonadota</taxon>
        <taxon>Alphaproteobacteria</taxon>
        <taxon>Hyphomicrobiales</taxon>
        <taxon>Brucellaceae</taxon>
        <taxon>Brucella/Ochrobactrum group</taxon>
        <taxon>Brucella</taxon>
    </lineage>
</organism>
<proteinExistence type="inferred from homology"/>
<dbReference type="EC" id="2.2.1.2" evidence="1"/>
<dbReference type="EMBL" id="CP000758">
    <property type="protein sequence ID" value="ABS13819.1"/>
    <property type="molecule type" value="Genomic_DNA"/>
</dbReference>
<dbReference type="SMR" id="A6WXW5"/>
<dbReference type="STRING" id="439375.Oant_1099"/>
<dbReference type="KEGG" id="oan:Oant_1099"/>
<dbReference type="eggNOG" id="COG0176">
    <property type="taxonomic scope" value="Bacteria"/>
</dbReference>
<dbReference type="HOGENOM" id="CLU_079764_0_0_5"/>
<dbReference type="PhylomeDB" id="A6WXW5"/>
<dbReference type="UniPathway" id="UPA00115">
    <property type="reaction ID" value="UER00414"/>
</dbReference>
<dbReference type="Proteomes" id="UP000002301">
    <property type="component" value="Chromosome 1"/>
</dbReference>
<dbReference type="GO" id="GO:0005737">
    <property type="term" value="C:cytoplasm"/>
    <property type="evidence" value="ECO:0007669"/>
    <property type="project" value="UniProtKB-SubCell"/>
</dbReference>
<dbReference type="GO" id="GO:0016832">
    <property type="term" value="F:aldehyde-lyase activity"/>
    <property type="evidence" value="ECO:0007669"/>
    <property type="project" value="InterPro"/>
</dbReference>
<dbReference type="GO" id="GO:0004801">
    <property type="term" value="F:transaldolase activity"/>
    <property type="evidence" value="ECO:0007669"/>
    <property type="project" value="UniProtKB-UniRule"/>
</dbReference>
<dbReference type="GO" id="GO:0005975">
    <property type="term" value="P:carbohydrate metabolic process"/>
    <property type="evidence" value="ECO:0007669"/>
    <property type="project" value="InterPro"/>
</dbReference>
<dbReference type="GO" id="GO:0006098">
    <property type="term" value="P:pentose-phosphate shunt"/>
    <property type="evidence" value="ECO:0007669"/>
    <property type="project" value="UniProtKB-UniRule"/>
</dbReference>
<dbReference type="CDD" id="cd00956">
    <property type="entry name" value="Transaldolase_FSA"/>
    <property type="match status" value="1"/>
</dbReference>
<dbReference type="FunFam" id="3.20.20.70:FF:000018">
    <property type="entry name" value="Probable transaldolase"/>
    <property type="match status" value="1"/>
</dbReference>
<dbReference type="Gene3D" id="3.20.20.70">
    <property type="entry name" value="Aldolase class I"/>
    <property type="match status" value="1"/>
</dbReference>
<dbReference type="HAMAP" id="MF_00494">
    <property type="entry name" value="Transaldolase_3b"/>
    <property type="match status" value="1"/>
</dbReference>
<dbReference type="InterPro" id="IPR013785">
    <property type="entry name" value="Aldolase_TIM"/>
</dbReference>
<dbReference type="InterPro" id="IPR001585">
    <property type="entry name" value="TAL/FSA"/>
</dbReference>
<dbReference type="InterPro" id="IPR022999">
    <property type="entry name" value="Transaldolase_3B"/>
</dbReference>
<dbReference type="InterPro" id="IPR004731">
    <property type="entry name" value="Transaldolase_3B/F6P_aldolase"/>
</dbReference>
<dbReference type="InterPro" id="IPR018225">
    <property type="entry name" value="Transaldolase_AS"/>
</dbReference>
<dbReference type="InterPro" id="IPR033919">
    <property type="entry name" value="TSA/FSA_arc/bac"/>
</dbReference>
<dbReference type="NCBIfam" id="TIGR00875">
    <property type="entry name" value="fsa_talC_mipB"/>
    <property type="match status" value="1"/>
</dbReference>
<dbReference type="PANTHER" id="PTHR10683:SF40">
    <property type="entry name" value="FRUCTOSE-6-PHOSPHATE ALDOLASE 1-RELATED"/>
    <property type="match status" value="1"/>
</dbReference>
<dbReference type="PANTHER" id="PTHR10683">
    <property type="entry name" value="TRANSALDOLASE"/>
    <property type="match status" value="1"/>
</dbReference>
<dbReference type="Pfam" id="PF00923">
    <property type="entry name" value="TAL_FSA"/>
    <property type="match status" value="1"/>
</dbReference>
<dbReference type="SUPFAM" id="SSF51569">
    <property type="entry name" value="Aldolase"/>
    <property type="match status" value="1"/>
</dbReference>
<dbReference type="PROSITE" id="PS01054">
    <property type="entry name" value="TRANSALDOLASE_1"/>
    <property type="match status" value="1"/>
</dbReference>
<dbReference type="PROSITE" id="PS00958">
    <property type="entry name" value="TRANSALDOLASE_2"/>
    <property type="match status" value="1"/>
</dbReference>
<reference key="1">
    <citation type="journal article" date="2011" name="J. Bacteriol.">
        <title>Genome of Ochrobactrum anthropi ATCC 49188 T, a versatile opportunistic pathogen and symbiont of several eukaryotic hosts.</title>
        <authorList>
            <person name="Chain P.S."/>
            <person name="Lang D.M."/>
            <person name="Comerci D.J."/>
            <person name="Malfatti S.A."/>
            <person name="Vergez L.M."/>
            <person name="Shin M."/>
            <person name="Ugalde R.A."/>
            <person name="Garcia E."/>
            <person name="Tolmasky M.E."/>
        </authorList>
    </citation>
    <scope>NUCLEOTIDE SEQUENCE [LARGE SCALE GENOMIC DNA]</scope>
    <source>
        <strain>ATCC 49188 / DSM 6882 / CCUG 24695 / JCM 21032 / LMG 3331 / NBRC 15819 / NCTC 12168 / Alc 37</strain>
    </source>
</reference>
<comment type="function">
    <text evidence="1">Transaldolase is important for the balance of metabolites in the pentose-phosphate pathway.</text>
</comment>
<comment type="catalytic activity">
    <reaction evidence="1">
        <text>D-sedoheptulose 7-phosphate + D-glyceraldehyde 3-phosphate = D-erythrose 4-phosphate + beta-D-fructose 6-phosphate</text>
        <dbReference type="Rhea" id="RHEA:17053"/>
        <dbReference type="ChEBI" id="CHEBI:16897"/>
        <dbReference type="ChEBI" id="CHEBI:57483"/>
        <dbReference type="ChEBI" id="CHEBI:57634"/>
        <dbReference type="ChEBI" id="CHEBI:59776"/>
        <dbReference type="EC" id="2.2.1.2"/>
    </reaction>
</comment>
<comment type="pathway">
    <text evidence="1">Carbohydrate degradation; pentose phosphate pathway; D-glyceraldehyde 3-phosphate and beta-D-fructose 6-phosphate from D-ribose 5-phosphate and D-xylulose 5-phosphate (non-oxidative stage): step 2/3.</text>
</comment>
<comment type="subcellular location">
    <subcellularLocation>
        <location evidence="1">Cytoplasm</location>
    </subcellularLocation>
</comment>
<comment type="similarity">
    <text evidence="1">Belongs to the transaldolase family. Type 3B subfamily.</text>
</comment>